<feature type="chain" id="PRO_1000053261" description="ATP synthase gamma chain">
    <location>
        <begin position="1"/>
        <end position="305"/>
    </location>
</feature>
<proteinExistence type="inferred from homology"/>
<reference key="1">
    <citation type="journal article" date="2008" name="PLoS ONE">
        <title>Genetic basis of virulence attenuation revealed by comparative genomic analysis of Mycobacterium tuberculosis strain H37Ra versus H37Rv.</title>
        <authorList>
            <person name="Zheng H."/>
            <person name="Lu L."/>
            <person name="Wang B."/>
            <person name="Pu S."/>
            <person name="Zhang X."/>
            <person name="Zhu G."/>
            <person name="Shi W."/>
            <person name="Zhang L."/>
            <person name="Wang H."/>
            <person name="Wang S."/>
            <person name="Zhao G."/>
            <person name="Zhang Y."/>
        </authorList>
    </citation>
    <scope>NUCLEOTIDE SEQUENCE [LARGE SCALE GENOMIC DNA]</scope>
    <source>
        <strain>ATCC 25177 / H37Ra</strain>
    </source>
</reference>
<name>ATPG_MYCTA</name>
<protein>
    <recommendedName>
        <fullName evidence="1">ATP synthase gamma chain</fullName>
    </recommendedName>
    <alternativeName>
        <fullName evidence="1">ATP synthase F1 sector gamma subunit</fullName>
    </alternativeName>
    <alternativeName>
        <fullName evidence="1">F-ATPase gamma subunit</fullName>
    </alternativeName>
</protein>
<keyword id="KW-0066">ATP synthesis</keyword>
<keyword id="KW-1003">Cell membrane</keyword>
<keyword id="KW-0139">CF(1)</keyword>
<keyword id="KW-0375">Hydrogen ion transport</keyword>
<keyword id="KW-0406">Ion transport</keyword>
<keyword id="KW-0472">Membrane</keyword>
<keyword id="KW-1185">Reference proteome</keyword>
<keyword id="KW-0813">Transport</keyword>
<accession>A5U208</accession>
<evidence type="ECO:0000255" key="1">
    <source>
        <dbReference type="HAMAP-Rule" id="MF_00815"/>
    </source>
</evidence>
<dbReference type="EMBL" id="CP000611">
    <property type="protein sequence ID" value="ABQ73058.1"/>
    <property type="molecule type" value="Genomic_DNA"/>
</dbReference>
<dbReference type="RefSeq" id="WP_003898819.1">
    <property type="nucleotide sequence ID" value="NZ_CP016972.1"/>
</dbReference>
<dbReference type="SMR" id="A5U208"/>
<dbReference type="KEGG" id="mra:MRA_1317"/>
<dbReference type="eggNOG" id="COG0224">
    <property type="taxonomic scope" value="Bacteria"/>
</dbReference>
<dbReference type="HOGENOM" id="CLU_050669_0_0_11"/>
<dbReference type="Proteomes" id="UP000001988">
    <property type="component" value="Chromosome"/>
</dbReference>
<dbReference type="GO" id="GO:0005886">
    <property type="term" value="C:plasma membrane"/>
    <property type="evidence" value="ECO:0007669"/>
    <property type="project" value="UniProtKB-SubCell"/>
</dbReference>
<dbReference type="GO" id="GO:0045259">
    <property type="term" value="C:proton-transporting ATP synthase complex"/>
    <property type="evidence" value="ECO:0007669"/>
    <property type="project" value="UniProtKB-KW"/>
</dbReference>
<dbReference type="GO" id="GO:0005524">
    <property type="term" value="F:ATP binding"/>
    <property type="evidence" value="ECO:0007669"/>
    <property type="project" value="UniProtKB-UniRule"/>
</dbReference>
<dbReference type="GO" id="GO:0046933">
    <property type="term" value="F:proton-transporting ATP synthase activity, rotational mechanism"/>
    <property type="evidence" value="ECO:0007669"/>
    <property type="project" value="UniProtKB-UniRule"/>
</dbReference>
<dbReference type="GO" id="GO:0042777">
    <property type="term" value="P:proton motive force-driven plasma membrane ATP synthesis"/>
    <property type="evidence" value="ECO:0007669"/>
    <property type="project" value="UniProtKB-UniRule"/>
</dbReference>
<dbReference type="CDD" id="cd12151">
    <property type="entry name" value="F1-ATPase_gamma"/>
    <property type="match status" value="1"/>
</dbReference>
<dbReference type="FunFam" id="3.40.1380.10:FF:000010">
    <property type="entry name" value="ATP synthase gamma chain"/>
    <property type="match status" value="1"/>
</dbReference>
<dbReference type="Gene3D" id="3.40.1380.10">
    <property type="match status" value="1"/>
</dbReference>
<dbReference type="Gene3D" id="1.10.287.80">
    <property type="entry name" value="ATP synthase, gamma subunit, helix hairpin domain"/>
    <property type="match status" value="1"/>
</dbReference>
<dbReference type="HAMAP" id="MF_00815">
    <property type="entry name" value="ATP_synth_gamma_bact"/>
    <property type="match status" value="1"/>
</dbReference>
<dbReference type="InterPro" id="IPR035968">
    <property type="entry name" value="ATP_synth_F1_ATPase_gsu"/>
</dbReference>
<dbReference type="InterPro" id="IPR000131">
    <property type="entry name" value="ATP_synth_F1_gsu"/>
</dbReference>
<dbReference type="InterPro" id="IPR023632">
    <property type="entry name" value="ATP_synth_F1_gsu_CS"/>
</dbReference>
<dbReference type="NCBIfam" id="TIGR01146">
    <property type="entry name" value="ATPsyn_F1gamma"/>
    <property type="match status" value="1"/>
</dbReference>
<dbReference type="NCBIfam" id="NF004145">
    <property type="entry name" value="PRK05621.1-2"/>
    <property type="match status" value="1"/>
</dbReference>
<dbReference type="PANTHER" id="PTHR11693">
    <property type="entry name" value="ATP SYNTHASE GAMMA CHAIN"/>
    <property type="match status" value="1"/>
</dbReference>
<dbReference type="PANTHER" id="PTHR11693:SF22">
    <property type="entry name" value="ATP SYNTHASE SUBUNIT GAMMA, MITOCHONDRIAL"/>
    <property type="match status" value="1"/>
</dbReference>
<dbReference type="Pfam" id="PF00231">
    <property type="entry name" value="ATP-synt"/>
    <property type="match status" value="1"/>
</dbReference>
<dbReference type="PRINTS" id="PR00126">
    <property type="entry name" value="ATPASEGAMMA"/>
</dbReference>
<dbReference type="SUPFAM" id="SSF52943">
    <property type="entry name" value="ATP synthase (F1-ATPase), gamma subunit"/>
    <property type="match status" value="1"/>
</dbReference>
<dbReference type="PROSITE" id="PS00153">
    <property type="entry name" value="ATPASE_GAMMA"/>
    <property type="match status" value="1"/>
</dbReference>
<organism>
    <name type="scientific">Mycobacterium tuberculosis (strain ATCC 25177 / H37Ra)</name>
    <dbReference type="NCBI Taxonomy" id="419947"/>
    <lineage>
        <taxon>Bacteria</taxon>
        <taxon>Bacillati</taxon>
        <taxon>Actinomycetota</taxon>
        <taxon>Actinomycetes</taxon>
        <taxon>Mycobacteriales</taxon>
        <taxon>Mycobacteriaceae</taxon>
        <taxon>Mycobacterium</taxon>
        <taxon>Mycobacterium tuberculosis complex</taxon>
    </lineage>
</organism>
<sequence>MAATLRELRGRIRSAGSIKKITKAQELIATSRIARAQARLESARPYAFEITRMLTTLAAEAALDHPLLVERPEPKRAGVLVVSSDRGLCGAYNANIFRRSEELFSLLREAGKQPVLYVVGRKAQNYYSFRNWNITESWMGFSEQPTYENAAEIASTLVDAFLLGTDNGEDQRSDSGEGVDELHIVYTEFKSMLSQSAEAHRIAPMVVEYVEEDIGPRTLYSFEPDATMLFESLLPRYLTTRVYAALLESAASELASRQRAMKSATDNADDLIKALTLMANRERQAQITQEISEIVGGANALAEAR</sequence>
<gene>
    <name evidence="1" type="primary">atpG</name>
    <name type="ordered locus">MRA_1317</name>
</gene>
<comment type="function">
    <text evidence="1">Produces ATP from ADP in the presence of a proton gradient across the membrane. The gamma chain is believed to be important in regulating ATPase activity and the flow of protons through the CF(0) complex.</text>
</comment>
<comment type="subunit">
    <text evidence="1">F-type ATPases have 2 components, CF(1) - the catalytic core - and CF(0) - the membrane proton channel. CF(1) has five subunits: alpha(3), beta(3), gamma(1), delta(1), epsilon(1). CF(0) has three main subunits: a, b and c.</text>
</comment>
<comment type="subcellular location">
    <subcellularLocation>
        <location evidence="1">Cell membrane</location>
        <topology evidence="1">Peripheral membrane protein</topology>
    </subcellularLocation>
</comment>
<comment type="similarity">
    <text evidence="1">Belongs to the ATPase gamma chain family.</text>
</comment>